<reference key="1">
    <citation type="journal article" date="2003" name="Plant Cell Physiol.">
        <title>The evolutionarily conserved OsPRR quintet: rice pseudo-response regulators implicated in circadian rhythm.</title>
        <authorList>
            <person name="Murakami M."/>
            <person name="Ashikari M."/>
            <person name="Miura K."/>
            <person name="Yamashino T."/>
            <person name="Mizuno T."/>
        </authorList>
    </citation>
    <scope>NUCLEOTIDE SEQUENCE [MRNA]</scope>
    <scope>INDUCTION</scope>
    <source>
        <strain>cv. Nipponbare</strain>
    </source>
</reference>
<reference key="2">
    <citation type="journal article" date="2005" name="Nature">
        <title>The map-based sequence of the rice genome.</title>
        <authorList>
            <consortium name="International rice genome sequencing project (IRGSP)"/>
        </authorList>
    </citation>
    <scope>NUCLEOTIDE SEQUENCE [LARGE SCALE GENOMIC DNA]</scope>
    <source>
        <strain>cv. Nipponbare</strain>
    </source>
</reference>
<reference key="3">
    <citation type="journal article" date="2008" name="Nucleic Acids Res.">
        <title>The rice annotation project database (RAP-DB): 2008 update.</title>
        <authorList>
            <consortium name="The rice annotation project (RAP)"/>
        </authorList>
    </citation>
    <scope>GENOME REANNOTATION</scope>
    <source>
        <strain>cv. Nipponbare</strain>
    </source>
</reference>
<reference key="4">
    <citation type="journal article" date="2013" name="Rice">
        <title>Improvement of the Oryza sativa Nipponbare reference genome using next generation sequence and optical map data.</title>
        <authorList>
            <person name="Kawahara Y."/>
            <person name="de la Bastide M."/>
            <person name="Hamilton J.P."/>
            <person name="Kanamori H."/>
            <person name="McCombie W.R."/>
            <person name="Ouyang S."/>
            <person name="Schwartz D.C."/>
            <person name="Tanaka T."/>
            <person name="Wu J."/>
            <person name="Zhou S."/>
            <person name="Childs K.L."/>
            <person name="Davidson R.M."/>
            <person name="Lin H."/>
            <person name="Quesada-Ocampo L."/>
            <person name="Vaillancourt B."/>
            <person name="Sakai H."/>
            <person name="Lee S.S."/>
            <person name="Kim J."/>
            <person name="Numa H."/>
            <person name="Itoh T."/>
            <person name="Buell C.R."/>
            <person name="Matsumoto T."/>
        </authorList>
    </citation>
    <scope>GENOME REANNOTATION</scope>
    <source>
        <strain>cv. Nipponbare</strain>
    </source>
</reference>
<reference key="5">
    <citation type="journal article" date="2005" name="Biosci. Biotechnol. Biochem.">
        <title>Circadian-associated rice pseudo response regulators (OsPRRs): insight into the control of flowering time.</title>
        <authorList>
            <person name="Murakami M."/>
            <person name="Matsushika A."/>
            <person name="Ashikari M."/>
            <person name="Yamashino T."/>
            <person name="Mizuno T."/>
        </authorList>
    </citation>
    <scope>INDUCTION</scope>
</reference>
<reference key="6">
    <citation type="journal article" date="2013" name="Mol. Plant">
        <title>Natural variation in OsPRR37 regulates heading date and contributes to rice cultivation at a wide range of latitudes.</title>
        <authorList>
            <person name="Koo B.H."/>
            <person name="Yoo S.C."/>
            <person name="Park J.W."/>
            <person name="Kwon C.T."/>
            <person name="Lee B.D."/>
            <person name="An G."/>
            <person name="Zhang Z."/>
            <person name="Li J."/>
            <person name="Li Z."/>
            <person name="Paek N.C."/>
        </authorList>
    </citation>
    <scope>FUNCTION</scope>
</reference>
<reference key="7">
    <citation type="journal article" date="2014" name="Proc. Natl. Acad. Sci. U.S.A.">
        <title>Days to heading 7, a major quantitative locus determining photoperiod sensitivity and regional adaptation in rice.</title>
        <authorList>
            <person name="Gao H."/>
            <person name="Jin M."/>
            <person name="Zheng X.M."/>
            <person name="Chen J."/>
            <person name="Yuan D."/>
            <person name="Xin Y."/>
            <person name="Wang M."/>
            <person name="Huang D."/>
            <person name="Zhang Z."/>
            <person name="Zhou K."/>
            <person name="Sheng P."/>
            <person name="Ma J."/>
            <person name="Ma W."/>
            <person name="Deng H."/>
            <person name="Jiang L."/>
            <person name="Liu S."/>
            <person name="Wang H."/>
            <person name="Wu C."/>
            <person name="Yuan L."/>
            <person name="Wan J."/>
        </authorList>
    </citation>
    <scope>FUNCTION</scope>
    <scope>SUBCELLULAR LOCATION</scope>
    <scope>INDUCTION</scope>
    <scope>POLYMORPHISM</scope>
</reference>
<dbReference type="EMBL" id="AB189039">
    <property type="protein sequence ID" value="BAD38855.1"/>
    <property type="molecule type" value="mRNA"/>
</dbReference>
<dbReference type="EMBL" id="AP005199">
    <property type="protein sequence ID" value="BAC84066.1"/>
    <property type="molecule type" value="Genomic_DNA"/>
</dbReference>
<dbReference type="EMBL" id="AP008213">
    <property type="protein sequence ID" value="BAF22657.1"/>
    <property type="molecule type" value="Genomic_DNA"/>
</dbReference>
<dbReference type="EMBL" id="AP014963">
    <property type="protein sequence ID" value="BAT03379.1"/>
    <property type="molecule type" value="Genomic_DNA"/>
</dbReference>
<dbReference type="RefSeq" id="XP_015646601.1">
    <property type="nucleotide sequence ID" value="XM_015791115.1"/>
</dbReference>
<dbReference type="RefSeq" id="XP_015646602.1">
    <property type="nucleotide sequence ID" value="XM_015791116.1"/>
</dbReference>
<dbReference type="RefSeq" id="XP_015646603.1">
    <property type="nucleotide sequence ID" value="XM_015791117.1"/>
</dbReference>
<dbReference type="RefSeq" id="XP_015646604.1">
    <property type="nucleotide sequence ID" value="XM_015791118.1"/>
</dbReference>
<dbReference type="RefSeq" id="XP_015646605.1">
    <property type="nucleotide sequence ID" value="XM_015791119.1"/>
</dbReference>
<dbReference type="RefSeq" id="XP_015646606.1">
    <property type="nucleotide sequence ID" value="XM_015791120.1"/>
</dbReference>
<dbReference type="RefSeq" id="XP_015646607.1">
    <property type="nucleotide sequence ID" value="XM_015791121.1"/>
</dbReference>
<dbReference type="SMR" id="Q0D3B6"/>
<dbReference type="FunCoup" id="Q0D3B6">
    <property type="interactions" value="531"/>
</dbReference>
<dbReference type="STRING" id="39947.Q0D3B6"/>
<dbReference type="iPTMnet" id="Q0D3B6"/>
<dbReference type="PaxDb" id="39947-Q0D3B6"/>
<dbReference type="EnsemblPlants" id="Os07t0695100-01">
    <property type="protein sequence ID" value="Os07t0695100-01"/>
    <property type="gene ID" value="Os07g0695100"/>
</dbReference>
<dbReference type="GeneID" id="4344399"/>
<dbReference type="Gramene" id="Os07t0695100-01">
    <property type="protein sequence ID" value="Os07t0695100-01"/>
    <property type="gene ID" value="Os07g0695100"/>
</dbReference>
<dbReference type="KEGG" id="dosa:Os07g0695100"/>
<dbReference type="KEGG" id="osa:4344399"/>
<dbReference type="eggNOG" id="KOG1601">
    <property type="taxonomic scope" value="Eukaryota"/>
</dbReference>
<dbReference type="HOGENOM" id="CLU_015512_1_0_1"/>
<dbReference type="InParanoid" id="Q0D3B6"/>
<dbReference type="OMA" id="MMGTAHH"/>
<dbReference type="OrthoDB" id="60033at2759"/>
<dbReference type="PlantReactome" id="R-OSA-8933811">
    <property type="pathway name" value="Circadian rhythm"/>
</dbReference>
<dbReference type="PlantReactome" id="R-OSA-9627657">
    <property type="pathway name" value="Regulation of leaf development"/>
</dbReference>
<dbReference type="Proteomes" id="UP000000763">
    <property type="component" value="Chromosome 7"/>
</dbReference>
<dbReference type="Proteomes" id="UP000059680">
    <property type="component" value="Chromosome 7"/>
</dbReference>
<dbReference type="ExpressionAtlas" id="Q0D3B6">
    <property type="expression patterns" value="baseline and differential"/>
</dbReference>
<dbReference type="GO" id="GO:0005634">
    <property type="term" value="C:nucleus"/>
    <property type="evidence" value="ECO:0000314"/>
    <property type="project" value="UniProtKB"/>
</dbReference>
<dbReference type="GO" id="GO:0009736">
    <property type="term" value="P:cytokinin-activated signaling pathway"/>
    <property type="evidence" value="ECO:0007669"/>
    <property type="project" value="InterPro"/>
</dbReference>
<dbReference type="GO" id="GO:0009908">
    <property type="term" value="P:flower development"/>
    <property type="evidence" value="ECO:0007669"/>
    <property type="project" value="UniProtKB-KW"/>
</dbReference>
<dbReference type="GO" id="GO:0048579">
    <property type="term" value="P:negative regulation of long-day photoperiodism, flowering"/>
    <property type="evidence" value="ECO:0000315"/>
    <property type="project" value="UniProtKB"/>
</dbReference>
<dbReference type="GO" id="GO:0000160">
    <property type="term" value="P:phosphorelay signal transduction system"/>
    <property type="evidence" value="ECO:0007669"/>
    <property type="project" value="UniProtKB-KW"/>
</dbReference>
<dbReference type="GO" id="GO:0009585">
    <property type="term" value="P:red, far-red light phototransduction"/>
    <property type="evidence" value="ECO:0007669"/>
    <property type="project" value="UniProtKB-KW"/>
</dbReference>
<dbReference type="GO" id="GO:0048511">
    <property type="term" value="P:rhythmic process"/>
    <property type="evidence" value="ECO:0007669"/>
    <property type="project" value="UniProtKB-KW"/>
</dbReference>
<dbReference type="CDD" id="cd17582">
    <property type="entry name" value="psREC_PRR"/>
    <property type="match status" value="1"/>
</dbReference>
<dbReference type="FunFam" id="3.40.50.2300:FF:000214">
    <property type="entry name" value="Two-component response regulator-like PRR37"/>
    <property type="match status" value="1"/>
</dbReference>
<dbReference type="Gene3D" id="3.40.50.2300">
    <property type="match status" value="1"/>
</dbReference>
<dbReference type="InterPro" id="IPR045279">
    <property type="entry name" value="ARR-like"/>
</dbReference>
<dbReference type="InterPro" id="IPR010402">
    <property type="entry name" value="CCT_domain"/>
</dbReference>
<dbReference type="InterPro" id="IPR011006">
    <property type="entry name" value="CheY-like_superfamily"/>
</dbReference>
<dbReference type="InterPro" id="IPR001789">
    <property type="entry name" value="Sig_transdc_resp-reg_receiver"/>
</dbReference>
<dbReference type="PANTHER" id="PTHR43874">
    <property type="entry name" value="TWO-COMPONENT RESPONSE REGULATOR"/>
    <property type="match status" value="1"/>
</dbReference>
<dbReference type="PANTHER" id="PTHR43874:SF64">
    <property type="entry name" value="TWO-COMPONENT RESPONSE REGULATOR-LIKE PRR37"/>
    <property type="match status" value="1"/>
</dbReference>
<dbReference type="Pfam" id="PF06203">
    <property type="entry name" value="CCT"/>
    <property type="match status" value="1"/>
</dbReference>
<dbReference type="Pfam" id="PF00072">
    <property type="entry name" value="Response_reg"/>
    <property type="match status" value="1"/>
</dbReference>
<dbReference type="SMART" id="SM00448">
    <property type="entry name" value="REC"/>
    <property type="match status" value="1"/>
</dbReference>
<dbReference type="SUPFAM" id="SSF52172">
    <property type="entry name" value="CheY-like"/>
    <property type="match status" value="1"/>
</dbReference>
<dbReference type="PROSITE" id="PS51017">
    <property type="entry name" value="CCT"/>
    <property type="match status" value="1"/>
</dbReference>
<dbReference type="PROSITE" id="PS50110">
    <property type="entry name" value="RESPONSE_REGULATORY"/>
    <property type="match status" value="1"/>
</dbReference>
<feature type="chain" id="PRO_0000081443" description="Two-component response regulator-like PRR37">
    <location>
        <begin position="1"/>
        <end position="742"/>
    </location>
</feature>
<feature type="domain" description="Response regulatory" evidence="2">
    <location>
        <begin position="63"/>
        <end position="181"/>
    </location>
</feature>
<feature type="domain" description="CCT" evidence="3">
    <location>
        <begin position="682"/>
        <end position="724"/>
    </location>
</feature>
<feature type="region of interest" description="Disordered" evidence="4">
    <location>
        <begin position="186"/>
        <end position="249"/>
    </location>
</feature>
<feature type="region of interest" description="Disordered" evidence="4">
    <location>
        <begin position="290"/>
        <end position="346"/>
    </location>
</feature>
<feature type="region of interest" description="Disordered" evidence="4">
    <location>
        <begin position="377"/>
        <end position="402"/>
    </location>
</feature>
<feature type="region of interest" description="Disordered" evidence="4">
    <location>
        <begin position="478"/>
        <end position="517"/>
    </location>
</feature>
<feature type="region of interest" description="Disordered" evidence="4">
    <location>
        <begin position="533"/>
        <end position="568"/>
    </location>
</feature>
<feature type="region of interest" description="Disordered" evidence="4">
    <location>
        <begin position="590"/>
        <end position="671"/>
    </location>
</feature>
<feature type="region of interest" description="Disordered" evidence="4">
    <location>
        <begin position="697"/>
        <end position="742"/>
    </location>
</feature>
<feature type="compositionally biased region" description="Low complexity" evidence="4">
    <location>
        <begin position="186"/>
        <end position="195"/>
    </location>
</feature>
<feature type="compositionally biased region" description="Polar residues" evidence="4">
    <location>
        <begin position="236"/>
        <end position="248"/>
    </location>
</feature>
<feature type="compositionally biased region" description="Basic and acidic residues" evidence="4">
    <location>
        <begin position="299"/>
        <end position="313"/>
    </location>
</feature>
<feature type="compositionally biased region" description="Polar residues" evidence="4">
    <location>
        <begin position="318"/>
        <end position="330"/>
    </location>
</feature>
<feature type="compositionally biased region" description="Basic and acidic residues" evidence="4">
    <location>
        <begin position="331"/>
        <end position="341"/>
    </location>
</feature>
<feature type="compositionally biased region" description="Low complexity" evidence="4">
    <location>
        <begin position="490"/>
        <end position="502"/>
    </location>
</feature>
<feature type="compositionally biased region" description="Polar residues" evidence="4">
    <location>
        <begin position="503"/>
        <end position="512"/>
    </location>
</feature>
<feature type="compositionally biased region" description="Low complexity" evidence="4">
    <location>
        <begin position="618"/>
        <end position="634"/>
    </location>
</feature>
<feature type="compositionally biased region" description="Gly residues" evidence="4">
    <location>
        <begin position="656"/>
        <end position="667"/>
    </location>
</feature>
<feature type="compositionally biased region" description="Basic residues" evidence="4">
    <location>
        <begin position="697"/>
        <end position="708"/>
    </location>
</feature>
<feature type="compositionally biased region" description="Low complexity" evidence="4">
    <location>
        <begin position="719"/>
        <end position="731"/>
    </location>
</feature>
<feature type="sequence conflict" description="In Ref. 1; BAD38855." evidence="12" ref="1">
    <original>N</original>
    <variation>D</variation>
    <location>
        <position position="639"/>
    </location>
</feature>
<sequence length="742" mass="79918">MMGTAHHNQTAGSALGVGVGDANDAVPGAGGGGYSDPDGGPISGVQRPPQVCWERFIQKKTIKVLLVDSDDSTRQVVSALLRHCMYEVIPAENGQQAWTYLEDMQNSIDLVLTEVVMPGVSGISLLSRIMNHNICKNIPVIMMSSNDAMGTVFKCLSKGAVDFLVKPIRKNELKNLWQHVWRRCHSSSGSGSESGIQTQKCAKSKSGDESNNNNGSNDDDDDDGVIMGLNARDGSDNGSGTQAQSSWTKRAVEIDSPQAMSPDQLADPPDSTCAQVIHLKSDICSNRWLPCTSNKNSKKQKETNDDFKGKDLEIGSPRNLNTAYQSSPNERSIKPTDRRNEYPLQNNSKEAAMENLEESSVRAADLIGSMAKNMDAQQAARAANAPNCSSKVPEGKDKNRDNIMPSLELSLKRSRSTGDGANAIQEEQRNVLRRSDLSAFTRYHTPVASNQGGTGFMGSCSLHDNSSEAMKTDSAYNMKSNSDAAPIKQGSNGSSNNNDMGSTTKNVVTKPSTNKERVMSPSAVKANGHTSAFHPAQHWTSPANTTGKEKTDEVANNAAKRAQPGEVQSNLVQHPRPILHYVHFDVSRENGGSGAPQCGSSNVFDPPVEGHAANYGVNGSNSGSNNGSNGQNGSTTAVNAERPNMEIANGTINKSGPGGGNGSGSGSGNDMYLKRFTQREHRVAAVIKFRQKRKERNFGKKVRYQSRKRLAEQRPRVRGQFVRQAVQDQQQQGGGREAAADR</sequence>
<gene>
    <name evidence="9" type="primary">PRR37</name>
    <name evidence="11" type="synonym">DTH7</name>
    <name evidence="10" type="synonym">HD2</name>
    <name type="ordered locus">Os07g0695100</name>
    <name type="ordered locus">LOC_Os07g49460</name>
    <name type="ORF">P0627E10.21</name>
</gene>
<protein>
    <recommendedName>
        <fullName evidence="12">Two-component response regulator-like PRR37</fullName>
    </recommendedName>
    <alternativeName>
        <fullName evidence="11">Protein DAYS TO HEADING 7</fullName>
    </alternativeName>
    <alternativeName>
        <fullName evidence="12">Protein HEADING DATE 2</fullName>
    </alternativeName>
    <alternativeName>
        <fullName evidence="12">Pseudo-response regulator 37</fullName>
        <shortName evidence="9">OsPRR37</shortName>
    </alternativeName>
</protein>
<organism>
    <name type="scientific">Oryza sativa subsp. japonica</name>
    <name type="common">Rice</name>
    <dbReference type="NCBI Taxonomy" id="39947"/>
    <lineage>
        <taxon>Eukaryota</taxon>
        <taxon>Viridiplantae</taxon>
        <taxon>Streptophyta</taxon>
        <taxon>Embryophyta</taxon>
        <taxon>Tracheophyta</taxon>
        <taxon>Spermatophyta</taxon>
        <taxon>Magnoliopsida</taxon>
        <taxon>Liliopsida</taxon>
        <taxon>Poales</taxon>
        <taxon>Poaceae</taxon>
        <taxon>BOP clade</taxon>
        <taxon>Oryzoideae</taxon>
        <taxon>Oryzeae</taxon>
        <taxon>Oryzinae</taxon>
        <taxon>Oryza</taxon>
        <taxon>Oryza sativa</taxon>
    </lineage>
</organism>
<evidence type="ECO:0000250" key="1">
    <source>
        <dbReference type="UniProtKB" id="Q9LKL2"/>
    </source>
</evidence>
<evidence type="ECO:0000255" key="2">
    <source>
        <dbReference type="PROSITE-ProRule" id="PRU00169"/>
    </source>
</evidence>
<evidence type="ECO:0000255" key="3">
    <source>
        <dbReference type="PROSITE-ProRule" id="PRU00357"/>
    </source>
</evidence>
<evidence type="ECO:0000256" key="4">
    <source>
        <dbReference type="SAM" id="MobiDB-lite"/>
    </source>
</evidence>
<evidence type="ECO:0000269" key="5">
    <source>
    </source>
</evidence>
<evidence type="ECO:0000269" key="6">
    <source>
    </source>
</evidence>
<evidence type="ECO:0000269" key="7">
    <source>
    </source>
</evidence>
<evidence type="ECO:0000269" key="8">
    <source>
    </source>
</evidence>
<evidence type="ECO:0000303" key="9">
    <source>
    </source>
</evidence>
<evidence type="ECO:0000303" key="10">
    <source>
    </source>
</evidence>
<evidence type="ECO:0000303" key="11">
    <source>
    </source>
</evidence>
<evidence type="ECO:0000305" key="12"/>
<comment type="function">
    <text evidence="1 7 8">Probable transcription factor involved in the regulation of flowering time under long day (LD) conditions. Functions as a repressor of flowering. Controls flowering time by negatively regulating the expression of HD3A (PubMed:23713079, PubMed:25378698). Acts downstream of the phytochrome B to repress the expression of EHD1, an activator of the flowering promoter genes HD3A and RFT1 (PubMed:25378698). Controls photoperiodic flowering response. Seems to be one of the component of the circadian clock. Expression of several members of the ARR-like family is controlled by circadian rhythm. The particular coordinated sequential expression of PRR73, PRR37, PRR95, PRR59 and PPR1 result to circadian waves that may be at the basis of the endogenous circadian clock (By similarity).</text>
</comment>
<comment type="subcellular location">
    <subcellularLocation>
        <location evidence="8">Nucleus</location>
    </subcellularLocation>
</comment>
<comment type="induction">
    <text evidence="5 6 8">Expressed with a circadian rhythm showing a broad peak in the middle day under long day (LD) conditions.</text>
</comment>
<comment type="polymorphism">
    <text evidence="8">The cultivar Kitaake contains a non-synonymous substitution of the conserved residue Leu-710 to Pro-710, which confers a reduced photoperiod sensitivity (PS) response, early flowering, and allows the cultivar Kitaake to grow in high latitudes with long photoperiod conditions.</text>
</comment>
<comment type="similarity">
    <text evidence="12">Belongs to the ARR-like family.</text>
</comment>
<comment type="caution">
    <text evidence="12">Lacks the phospho-accepting Asp (here Glu-114), present in the receiver domain, which is one of the conserved features of two-component response regulators (ARRs) family.</text>
</comment>
<proteinExistence type="evidence at transcript level"/>
<name>PRR37_ORYSJ</name>
<accession>Q0D3B6</accession>
<accession>A0A0P0XAZ4</accession>
<accession>Q689G8</accession>
<accession>Q6UV11</accession>
<accession>Q6Z3X9</accession>
<keyword id="KW-0090">Biological rhythms</keyword>
<keyword id="KW-0287">Flowering</keyword>
<keyword id="KW-0539">Nucleus</keyword>
<keyword id="KW-0607">Phytochrome signaling pathway</keyword>
<keyword id="KW-1185">Reference proteome</keyword>
<keyword id="KW-0804">Transcription</keyword>
<keyword id="KW-0805">Transcription regulation</keyword>
<keyword id="KW-0902">Two-component regulatory system</keyword>